<accession>Q8PCR4</accession>
<name>AMPA_XANCP</name>
<protein>
    <recommendedName>
        <fullName evidence="1">Probable cytosol aminopeptidase</fullName>
        <ecNumber evidence="1">3.4.11.1</ecNumber>
    </recommendedName>
    <alternativeName>
        <fullName evidence="1">Leucine aminopeptidase</fullName>
        <shortName evidence="1">LAP</shortName>
        <ecNumber evidence="1">3.4.11.10</ecNumber>
    </alternativeName>
    <alternativeName>
        <fullName evidence="1">Leucyl aminopeptidase</fullName>
    </alternativeName>
</protein>
<keyword id="KW-0031">Aminopeptidase</keyword>
<keyword id="KW-0963">Cytoplasm</keyword>
<keyword id="KW-0378">Hydrolase</keyword>
<keyword id="KW-0464">Manganese</keyword>
<keyword id="KW-0479">Metal-binding</keyword>
<keyword id="KW-0645">Protease</keyword>
<keyword id="KW-1185">Reference proteome</keyword>
<dbReference type="EC" id="3.4.11.1" evidence="1"/>
<dbReference type="EC" id="3.4.11.10" evidence="1"/>
<dbReference type="EMBL" id="AE008922">
    <property type="protein sequence ID" value="AAM39965.1"/>
    <property type="molecule type" value="Genomic_DNA"/>
</dbReference>
<dbReference type="RefSeq" id="NP_636041.1">
    <property type="nucleotide sequence ID" value="NC_003902.1"/>
</dbReference>
<dbReference type="RefSeq" id="WP_011035890.1">
    <property type="nucleotide sequence ID" value="NC_003902.1"/>
</dbReference>
<dbReference type="SMR" id="Q8PCR4"/>
<dbReference type="STRING" id="190485.XCC0649"/>
<dbReference type="EnsemblBacteria" id="AAM39965">
    <property type="protein sequence ID" value="AAM39965"/>
    <property type="gene ID" value="XCC0649"/>
</dbReference>
<dbReference type="KEGG" id="xcc:XCC0649"/>
<dbReference type="PATRIC" id="fig|190485.4.peg.711"/>
<dbReference type="eggNOG" id="COG0260">
    <property type="taxonomic scope" value="Bacteria"/>
</dbReference>
<dbReference type="HOGENOM" id="CLU_013734_2_2_6"/>
<dbReference type="OrthoDB" id="9809354at2"/>
<dbReference type="Proteomes" id="UP000001010">
    <property type="component" value="Chromosome"/>
</dbReference>
<dbReference type="GO" id="GO:0005737">
    <property type="term" value="C:cytoplasm"/>
    <property type="evidence" value="ECO:0000318"/>
    <property type="project" value="GO_Central"/>
</dbReference>
<dbReference type="GO" id="GO:0004177">
    <property type="term" value="F:aminopeptidase activity"/>
    <property type="evidence" value="ECO:0000318"/>
    <property type="project" value="GO_Central"/>
</dbReference>
<dbReference type="GO" id="GO:0030145">
    <property type="term" value="F:manganese ion binding"/>
    <property type="evidence" value="ECO:0007669"/>
    <property type="project" value="UniProtKB-UniRule"/>
</dbReference>
<dbReference type="GO" id="GO:0070006">
    <property type="term" value="F:metalloaminopeptidase activity"/>
    <property type="evidence" value="ECO:0007669"/>
    <property type="project" value="InterPro"/>
</dbReference>
<dbReference type="GO" id="GO:0006508">
    <property type="term" value="P:proteolysis"/>
    <property type="evidence" value="ECO:0000318"/>
    <property type="project" value="GO_Central"/>
</dbReference>
<dbReference type="CDD" id="cd00433">
    <property type="entry name" value="Peptidase_M17"/>
    <property type="match status" value="1"/>
</dbReference>
<dbReference type="Gene3D" id="3.40.220.10">
    <property type="entry name" value="Leucine Aminopeptidase, subunit E, domain 1"/>
    <property type="match status" value="1"/>
</dbReference>
<dbReference type="Gene3D" id="3.40.630.10">
    <property type="entry name" value="Zn peptidases"/>
    <property type="match status" value="1"/>
</dbReference>
<dbReference type="HAMAP" id="MF_00181">
    <property type="entry name" value="Cytosol_peptidase_M17"/>
    <property type="match status" value="1"/>
</dbReference>
<dbReference type="InterPro" id="IPR011356">
    <property type="entry name" value="Leucine_aapep/pepB"/>
</dbReference>
<dbReference type="InterPro" id="IPR043472">
    <property type="entry name" value="Macro_dom-like"/>
</dbReference>
<dbReference type="InterPro" id="IPR000819">
    <property type="entry name" value="Peptidase_M17_C"/>
</dbReference>
<dbReference type="InterPro" id="IPR023042">
    <property type="entry name" value="Peptidase_M17_leu_NH2_pept"/>
</dbReference>
<dbReference type="InterPro" id="IPR008283">
    <property type="entry name" value="Peptidase_M17_N"/>
</dbReference>
<dbReference type="NCBIfam" id="NF002074">
    <property type="entry name" value="PRK00913.1-4"/>
    <property type="match status" value="1"/>
</dbReference>
<dbReference type="PANTHER" id="PTHR11963:SF23">
    <property type="entry name" value="CYTOSOL AMINOPEPTIDASE"/>
    <property type="match status" value="1"/>
</dbReference>
<dbReference type="PANTHER" id="PTHR11963">
    <property type="entry name" value="LEUCINE AMINOPEPTIDASE-RELATED"/>
    <property type="match status" value="1"/>
</dbReference>
<dbReference type="Pfam" id="PF00883">
    <property type="entry name" value="Peptidase_M17"/>
    <property type="match status" value="1"/>
</dbReference>
<dbReference type="Pfam" id="PF02789">
    <property type="entry name" value="Peptidase_M17_N"/>
    <property type="match status" value="1"/>
</dbReference>
<dbReference type="PRINTS" id="PR00481">
    <property type="entry name" value="LAMNOPPTDASE"/>
</dbReference>
<dbReference type="SUPFAM" id="SSF52949">
    <property type="entry name" value="Macro domain-like"/>
    <property type="match status" value="1"/>
</dbReference>
<dbReference type="SUPFAM" id="SSF53187">
    <property type="entry name" value="Zn-dependent exopeptidases"/>
    <property type="match status" value="1"/>
</dbReference>
<dbReference type="PROSITE" id="PS00631">
    <property type="entry name" value="CYTOSOL_AP"/>
    <property type="match status" value="1"/>
</dbReference>
<feature type="chain" id="PRO_0000165817" description="Probable cytosol aminopeptidase">
    <location>
        <begin position="1"/>
        <end position="493"/>
    </location>
</feature>
<feature type="active site" evidence="1">
    <location>
        <position position="274"/>
    </location>
</feature>
<feature type="active site" evidence="1">
    <location>
        <position position="348"/>
    </location>
</feature>
<feature type="binding site" evidence="1">
    <location>
        <position position="262"/>
    </location>
    <ligand>
        <name>Mn(2+)</name>
        <dbReference type="ChEBI" id="CHEBI:29035"/>
        <label>2</label>
    </ligand>
</feature>
<feature type="binding site" evidence="1">
    <location>
        <position position="267"/>
    </location>
    <ligand>
        <name>Mn(2+)</name>
        <dbReference type="ChEBI" id="CHEBI:29035"/>
        <label>1</label>
    </ligand>
</feature>
<feature type="binding site" evidence="1">
    <location>
        <position position="267"/>
    </location>
    <ligand>
        <name>Mn(2+)</name>
        <dbReference type="ChEBI" id="CHEBI:29035"/>
        <label>2</label>
    </ligand>
</feature>
<feature type="binding site" evidence="1">
    <location>
        <position position="285"/>
    </location>
    <ligand>
        <name>Mn(2+)</name>
        <dbReference type="ChEBI" id="CHEBI:29035"/>
        <label>2</label>
    </ligand>
</feature>
<feature type="binding site" evidence="1">
    <location>
        <position position="344"/>
    </location>
    <ligand>
        <name>Mn(2+)</name>
        <dbReference type="ChEBI" id="CHEBI:29035"/>
        <label>1</label>
    </ligand>
</feature>
<feature type="binding site" evidence="1">
    <location>
        <position position="346"/>
    </location>
    <ligand>
        <name>Mn(2+)</name>
        <dbReference type="ChEBI" id="CHEBI:29035"/>
        <label>1</label>
    </ligand>
</feature>
<feature type="binding site" evidence="1">
    <location>
        <position position="346"/>
    </location>
    <ligand>
        <name>Mn(2+)</name>
        <dbReference type="ChEBI" id="CHEBI:29035"/>
        <label>2</label>
    </ligand>
</feature>
<sequence>MALQFTLNQDAPASAHVDCIVVGAFADKTLSPAAQALDSASQGRLTALVARGDVATKTGTTSLVHDLPGVQAPRVLVVGLGDAAKFGVAPYLKAIGDAARALKTGPIGTALLTLTELPVKARDAAWNIRQAVIVSDHAAYRYTATLGKKKVDDTGLTTLAIAGDDARALAVGIATAEGVEFARELGNLPPNYCTPAYLAETAAAFAGKFPGAEAEILDEQQMEALGMGSLLSVARGSANRPRLIVLKWNGGGEARPYVLVGKGITFDTGGVNLKTQGGIEEMKYDMCGGANVIGTFVATVKAELPINLVVVVPAVENAIDGNAYRPSDVITSMSGKTIEVGNTDAEGRLILCDALTYAERFNPEALVDVATLTGACMVALGHQTAGLMSKHDDLANELLAAGEHVFDRAWRLPLWDEYQGLLDSTFADVYNIGGRWGGAITAGCFLSRFTENQRWAHLDIAGVASDEGKRGMATGRPVGLLTQWLLDRAEGGN</sequence>
<reference key="1">
    <citation type="journal article" date="2002" name="Nature">
        <title>Comparison of the genomes of two Xanthomonas pathogens with differing host specificities.</title>
        <authorList>
            <person name="da Silva A.C.R."/>
            <person name="Ferro J.A."/>
            <person name="Reinach F.C."/>
            <person name="Farah C.S."/>
            <person name="Furlan L.R."/>
            <person name="Quaggio R.B."/>
            <person name="Monteiro-Vitorello C.B."/>
            <person name="Van Sluys M.A."/>
            <person name="Almeida N.F. Jr."/>
            <person name="Alves L.M.C."/>
            <person name="do Amaral A.M."/>
            <person name="Bertolini M.C."/>
            <person name="Camargo L.E.A."/>
            <person name="Camarotte G."/>
            <person name="Cannavan F."/>
            <person name="Cardozo J."/>
            <person name="Chambergo F."/>
            <person name="Ciapina L.P."/>
            <person name="Cicarelli R.M.B."/>
            <person name="Coutinho L.L."/>
            <person name="Cursino-Santos J.R."/>
            <person name="El-Dorry H."/>
            <person name="Faria J.B."/>
            <person name="Ferreira A.J.S."/>
            <person name="Ferreira R.C.C."/>
            <person name="Ferro M.I.T."/>
            <person name="Formighieri E.F."/>
            <person name="Franco M.C."/>
            <person name="Greggio C.C."/>
            <person name="Gruber A."/>
            <person name="Katsuyama A.M."/>
            <person name="Kishi L.T."/>
            <person name="Leite R.P."/>
            <person name="Lemos E.G.M."/>
            <person name="Lemos M.V.F."/>
            <person name="Locali E.C."/>
            <person name="Machado M.A."/>
            <person name="Madeira A.M.B.N."/>
            <person name="Martinez-Rossi N.M."/>
            <person name="Martins E.C."/>
            <person name="Meidanis J."/>
            <person name="Menck C.F.M."/>
            <person name="Miyaki C.Y."/>
            <person name="Moon D.H."/>
            <person name="Moreira L.M."/>
            <person name="Novo M.T.M."/>
            <person name="Okura V.K."/>
            <person name="Oliveira M.C."/>
            <person name="Oliveira V.R."/>
            <person name="Pereira H.A."/>
            <person name="Rossi A."/>
            <person name="Sena J.A.D."/>
            <person name="Silva C."/>
            <person name="de Souza R.F."/>
            <person name="Spinola L.A.F."/>
            <person name="Takita M.A."/>
            <person name="Tamura R.E."/>
            <person name="Teixeira E.C."/>
            <person name="Tezza R.I.D."/>
            <person name="Trindade dos Santos M."/>
            <person name="Truffi D."/>
            <person name="Tsai S.M."/>
            <person name="White F.F."/>
            <person name="Setubal J.C."/>
            <person name="Kitajima J.P."/>
        </authorList>
    </citation>
    <scope>NUCLEOTIDE SEQUENCE [LARGE SCALE GENOMIC DNA]</scope>
    <source>
        <strain>ATCC 33913 / DSM 3586 / NCPPB 528 / LMG 568 / P 25</strain>
    </source>
</reference>
<gene>
    <name evidence="1" type="primary">pepA</name>
    <name type="ordered locus">XCC0649</name>
</gene>
<evidence type="ECO:0000255" key="1">
    <source>
        <dbReference type="HAMAP-Rule" id="MF_00181"/>
    </source>
</evidence>
<comment type="function">
    <text evidence="1">Presumably involved in the processing and regular turnover of intracellular proteins. Catalyzes the removal of unsubstituted N-terminal amino acids from various peptides.</text>
</comment>
<comment type="catalytic activity">
    <reaction evidence="1">
        <text>Release of an N-terminal amino acid, Xaa-|-Yaa-, in which Xaa is preferably Leu, but may be other amino acids including Pro although not Arg or Lys, and Yaa may be Pro. Amino acid amides and methyl esters are also readily hydrolyzed, but rates on arylamides are exceedingly low.</text>
        <dbReference type="EC" id="3.4.11.1"/>
    </reaction>
</comment>
<comment type="catalytic activity">
    <reaction evidence="1">
        <text>Release of an N-terminal amino acid, preferentially leucine, but not glutamic or aspartic acids.</text>
        <dbReference type="EC" id="3.4.11.10"/>
    </reaction>
</comment>
<comment type="cofactor">
    <cofactor evidence="1">
        <name>Mn(2+)</name>
        <dbReference type="ChEBI" id="CHEBI:29035"/>
    </cofactor>
    <text evidence="1">Binds 2 manganese ions per subunit.</text>
</comment>
<comment type="subcellular location">
    <subcellularLocation>
        <location evidence="1">Cytoplasm</location>
    </subcellularLocation>
</comment>
<comment type="similarity">
    <text evidence="1">Belongs to the peptidase M17 family.</text>
</comment>
<proteinExistence type="inferred from homology"/>
<organism>
    <name type="scientific">Xanthomonas campestris pv. campestris (strain ATCC 33913 / DSM 3586 / NCPPB 528 / LMG 568 / P 25)</name>
    <dbReference type="NCBI Taxonomy" id="190485"/>
    <lineage>
        <taxon>Bacteria</taxon>
        <taxon>Pseudomonadati</taxon>
        <taxon>Pseudomonadota</taxon>
        <taxon>Gammaproteobacteria</taxon>
        <taxon>Lysobacterales</taxon>
        <taxon>Lysobacteraceae</taxon>
        <taxon>Xanthomonas</taxon>
    </lineage>
</organism>